<protein>
    <recommendedName>
        <fullName>Serine/threonine-protein phosphatase 2B catalytic subunit</fullName>
        <ecNumber>3.1.3.16</ecNumber>
    </recommendedName>
    <alternativeName>
        <fullName>Calmodulin-dependent calcineurin A subunit</fullName>
    </alternativeName>
</protein>
<feature type="chain" id="PRO_0000286158" description="Serine/threonine-protein phosphatase 2B catalytic subunit">
    <location>
        <begin position="1"/>
        <end position="534"/>
    </location>
</feature>
<feature type="region of interest" description="Disordered" evidence="2">
    <location>
        <begin position="375"/>
        <end position="398"/>
    </location>
</feature>
<feature type="region of interest" description="Disordered" evidence="2">
    <location>
        <begin position="475"/>
        <end position="534"/>
    </location>
</feature>
<feature type="compositionally biased region" description="Basic and acidic residues" evidence="2">
    <location>
        <begin position="475"/>
        <end position="497"/>
    </location>
</feature>
<feature type="compositionally biased region" description="Basic and acidic residues" evidence="2">
    <location>
        <begin position="524"/>
        <end position="534"/>
    </location>
</feature>
<feature type="active site" description="Proton donor" evidence="1">
    <location>
        <position position="149"/>
    </location>
</feature>
<feature type="binding site" evidence="1">
    <location>
        <position position="88"/>
    </location>
    <ligand>
        <name>Fe cation</name>
        <dbReference type="ChEBI" id="CHEBI:24875"/>
    </ligand>
</feature>
<feature type="binding site" evidence="1">
    <location>
        <position position="90"/>
    </location>
    <ligand>
        <name>Fe cation</name>
        <dbReference type="ChEBI" id="CHEBI:24875"/>
    </ligand>
</feature>
<feature type="binding site" evidence="1">
    <location>
        <position position="116"/>
    </location>
    <ligand>
        <name>Fe cation</name>
        <dbReference type="ChEBI" id="CHEBI:24875"/>
    </ligand>
</feature>
<feature type="binding site" evidence="1">
    <location>
        <position position="116"/>
    </location>
    <ligand>
        <name>Zn(2+)</name>
        <dbReference type="ChEBI" id="CHEBI:29105"/>
    </ligand>
</feature>
<feature type="binding site" evidence="1">
    <location>
        <position position="148"/>
    </location>
    <ligand>
        <name>Zn(2+)</name>
        <dbReference type="ChEBI" id="CHEBI:29105"/>
    </ligand>
</feature>
<feature type="binding site" evidence="1">
    <location>
        <position position="197"/>
    </location>
    <ligand>
        <name>Zn(2+)</name>
        <dbReference type="ChEBI" id="CHEBI:29105"/>
    </ligand>
</feature>
<feature type="binding site" evidence="1">
    <location>
        <position position="279"/>
    </location>
    <ligand>
        <name>Zn(2+)</name>
        <dbReference type="ChEBI" id="CHEBI:29105"/>
    </ligand>
</feature>
<feature type="helix" evidence="4">
    <location>
        <begin position="27"/>
        <end position="30"/>
    </location>
</feature>
<feature type="helix" evidence="4">
    <location>
        <begin position="41"/>
        <end position="49"/>
    </location>
</feature>
<feature type="helix" evidence="4">
    <location>
        <begin position="56"/>
        <end position="70"/>
    </location>
</feature>
<feature type="strand" evidence="4">
    <location>
        <begin position="75"/>
        <end position="79"/>
    </location>
</feature>
<feature type="strand" evidence="4">
    <location>
        <begin position="81"/>
        <end position="86"/>
    </location>
</feature>
<feature type="helix" evidence="4">
    <location>
        <begin position="93"/>
        <end position="103"/>
    </location>
</feature>
<feature type="strand" evidence="4">
    <location>
        <begin position="111"/>
        <end position="113"/>
    </location>
</feature>
<feature type="strand" evidence="4">
    <location>
        <begin position="118"/>
        <end position="121"/>
    </location>
</feature>
<feature type="helix" evidence="4">
    <location>
        <begin position="124"/>
        <end position="137"/>
    </location>
</feature>
<feature type="turn" evidence="4">
    <location>
        <begin position="139"/>
        <end position="141"/>
    </location>
</feature>
<feature type="strand" evidence="4">
    <location>
        <begin position="142"/>
        <end position="144"/>
    </location>
</feature>
<feature type="helix" evidence="4">
    <location>
        <begin position="152"/>
        <end position="157"/>
    </location>
</feature>
<feature type="helix" evidence="4">
    <location>
        <begin position="160"/>
        <end position="167"/>
    </location>
</feature>
<feature type="helix" evidence="4">
    <location>
        <begin position="170"/>
        <end position="180"/>
    </location>
</feature>
<feature type="strand" evidence="4">
    <location>
        <begin position="186"/>
        <end position="189"/>
    </location>
</feature>
<feature type="turn" evidence="4">
    <location>
        <begin position="190"/>
        <end position="192"/>
    </location>
</feature>
<feature type="strand" evidence="4">
    <location>
        <begin position="193"/>
        <end position="195"/>
    </location>
</feature>
<feature type="helix" evidence="4">
    <location>
        <begin position="207"/>
        <end position="211"/>
    </location>
</feature>
<feature type="strand" evidence="4">
    <location>
        <begin position="221"/>
        <end position="223"/>
    </location>
</feature>
<feature type="helix" evidence="4">
    <location>
        <begin position="224"/>
        <end position="230"/>
    </location>
</feature>
<feature type="turn" evidence="4">
    <location>
        <begin position="235"/>
        <end position="238"/>
    </location>
</feature>
<feature type="strand" evidence="4">
    <location>
        <begin position="246"/>
        <end position="248"/>
    </location>
</feature>
<feature type="turn" evidence="4">
    <location>
        <begin position="250"/>
        <end position="253"/>
    </location>
</feature>
<feature type="strand" evidence="4">
    <location>
        <begin position="254"/>
        <end position="258"/>
    </location>
</feature>
<feature type="helix" evidence="4">
    <location>
        <begin position="260"/>
        <end position="270"/>
    </location>
</feature>
<feature type="strand" evidence="4">
    <location>
        <begin position="273"/>
        <end position="277"/>
    </location>
</feature>
<feature type="strand" evidence="4">
    <location>
        <begin position="283"/>
        <end position="288"/>
    </location>
</feature>
<feature type="turn" evidence="4">
    <location>
        <begin position="293"/>
        <end position="295"/>
    </location>
</feature>
<feature type="strand" evidence="4">
    <location>
        <begin position="296"/>
        <end position="304"/>
    </location>
</feature>
<feature type="helix" evidence="4">
    <location>
        <begin position="309"/>
        <end position="311"/>
    </location>
</feature>
<feature type="strand" evidence="4">
    <location>
        <begin position="317"/>
        <end position="323"/>
    </location>
</feature>
<feature type="strand" evidence="4">
    <location>
        <begin position="326"/>
        <end position="332"/>
    </location>
</feature>
<feature type="helix" evidence="5">
    <location>
        <begin position="342"/>
        <end position="344"/>
    </location>
</feature>
<feature type="helix" evidence="5">
    <location>
        <begin position="347"/>
        <end position="367"/>
    </location>
</feature>
<name>PP2B_ASPFU</name>
<dbReference type="EC" id="3.1.3.16"/>
<dbReference type="EMBL" id="AAHF01000003">
    <property type="protein sequence ID" value="EAL91665.1"/>
    <property type="status" value="ALT_INIT"/>
    <property type="molecule type" value="Genomic_DNA"/>
</dbReference>
<dbReference type="RefSeq" id="XP_753703.1">
    <property type="nucleotide sequence ID" value="XM_748610.1"/>
</dbReference>
<dbReference type="PDB" id="6TZ7">
    <property type="method" value="X-ray"/>
    <property type="resolution" value="2.50 A"/>
    <property type="chains" value="A=2-370"/>
</dbReference>
<dbReference type="PDB" id="7U0U">
    <property type="method" value="X-ray"/>
    <property type="resolution" value="1.90 A"/>
    <property type="chains" value="A=335-370"/>
</dbReference>
<dbReference type="PDBsum" id="6TZ7"/>
<dbReference type="PDBsum" id="7U0U"/>
<dbReference type="SMR" id="Q4WUR1"/>
<dbReference type="FunCoup" id="Q4WUR1">
    <property type="interactions" value="515"/>
</dbReference>
<dbReference type="STRING" id="330879.Q4WUR1"/>
<dbReference type="GeneID" id="3511045"/>
<dbReference type="KEGG" id="afm:AFUA_5G09360"/>
<dbReference type="eggNOG" id="KOG0375">
    <property type="taxonomic scope" value="Eukaryota"/>
</dbReference>
<dbReference type="HOGENOM" id="CLU_004962_6_3_1"/>
<dbReference type="InParanoid" id="Q4WUR1"/>
<dbReference type="OrthoDB" id="5593063at2759"/>
<dbReference type="PHI-base" id="PHI:3849"/>
<dbReference type="Proteomes" id="UP000002530">
    <property type="component" value="Chromosome 5"/>
</dbReference>
<dbReference type="GO" id="GO:0005955">
    <property type="term" value="C:calcineurin complex"/>
    <property type="evidence" value="ECO:0000318"/>
    <property type="project" value="GO_Central"/>
</dbReference>
<dbReference type="GO" id="GO:0005737">
    <property type="term" value="C:cytoplasm"/>
    <property type="evidence" value="ECO:0000318"/>
    <property type="project" value="GO_Central"/>
</dbReference>
<dbReference type="GO" id="GO:0005516">
    <property type="term" value="F:calmodulin binding"/>
    <property type="evidence" value="ECO:0000318"/>
    <property type="project" value="GO_Central"/>
</dbReference>
<dbReference type="GO" id="GO:0033192">
    <property type="term" value="F:calmodulin-dependent protein phosphatase activity"/>
    <property type="evidence" value="ECO:0000318"/>
    <property type="project" value="GO_Central"/>
</dbReference>
<dbReference type="GO" id="GO:0046872">
    <property type="term" value="F:metal ion binding"/>
    <property type="evidence" value="ECO:0007669"/>
    <property type="project" value="UniProtKB-KW"/>
</dbReference>
<dbReference type="GO" id="GO:0097720">
    <property type="term" value="P:calcineurin-mediated signaling"/>
    <property type="evidence" value="ECO:0000318"/>
    <property type="project" value="GO_Central"/>
</dbReference>
<dbReference type="GO" id="GO:0031505">
    <property type="term" value="P:fungal-type cell wall organization"/>
    <property type="evidence" value="ECO:0000318"/>
    <property type="project" value="GO_Central"/>
</dbReference>
<dbReference type="CDD" id="cd07416">
    <property type="entry name" value="MPP_PP2B"/>
    <property type="match status" value="1"/>
</dbReference>
<dbReference type="FunFam" id="3.60.21.10:FF:000002">
    <property type="entry name" value="Serine/threonine-protein phosphatase"/>
    <property type="match status" value="1"/>
</dbReference>
<dbReference type="Gene3D" id="3.60.21.10">
    <property type="match status" value="1"/>
</dbReference>
<dbReference type="InterPro" id="IPR004843">
    <property type="entry name" value="Calcineurin-like_PHP_ApaH"/>
</dbReference>
<dbReference type="InterPro" id="IPR029052">
    <property type="entry name" value="Metallo-depent_PP-like"/>
</dbReference>
<dbReference type="InterPro" id="IPR041751">
    <property type="entry name" value="MPP_PP2B"/>
</dbReference>
<dbReference type="InterPro" id="IPR043360">
    <property type="entry name" value="PP2B"/>
</dbReference>
<dbReference type="InterPro" id="IPR006186">
    <property type="entry name" value="Ser/Thr-sp_prot-phosphatase"/>
</dbReference>
<dbReference type="PANTHER" id="PTHR45673">
    <property type="entry name" value="SERINE/THREONINE-PROTEIN PHOSPHATASE 2B CATALYTIC SUBUNIT 1-RELATED"/>
    <property type="match status" value="1"/>
</dbReference>
<dbReference type="Pfam" id="PF00149">
    <property type="entry name" value="Metallophos"/>
    <property type="match status" value="1"/>
</dbReference>
<dbReference type="PRINTS" id="PR00114">
    <property type="entry name" value="STPHPHTASE"/>
</dbReference>
<dbReference type="SMART" id="SM00156">
    <property type="entry name" value="PP2Ac"/>
    <property type="match status" value="1"/>
</dbReference>
<dbReference type="SUPFAM" id="SSF56300">
    <property type="entry name" value="Metallo-dependent phosphatases"/>
    <property type="match status" value="1"/>
</dbReference>
<dbReference type="PROSITE" id="PS00125">
    <property type="entry name" value="SER_THR_PHOSPHATASE"/>
    <property type="match status" value="1"/>
</dbReference>
<reference key="1">
    <citation type="journal article" date="2005" name="Nature">
        <title>Genomic sequence of the pathogenic and allergenic filamentous fungus Aspergillus fumigatus.</title>
        <authorList>
            <person name="Nierman W.C."/>
            <person name="Pain A."/>
            <person name="Anderson M.J."/>
            <person name="Wortman J.R."/>
            <person name="Kim H.S."/>
            <person name="Arroyo J."/>
            <person name="Berriman M."/>
            <person name="Abe K."/>
            <person name="Archer D.B."/>
            <person name="Bermejo C."/>
            <person name="Bennett J.W."/>
            <person name="Bowyer P."/>
            <person name="Chen D."/>
            <person name="Collins M."/>
            <person name="Coulsen R."/>
            <person name="Davies R."/>
            <person name="Dyer P.S."/>
            <person name="Farman M.L."/>
            <person name="Fedorova N."/>
            <person name="Fedorova N.D."/>
            <person name="Feldblyum T.V."/>
            <person name="Fischer R."/>
            <person name="Fosker N."/>
            <person name="Fraser A."/>
            <person name="Garcia J.L."/>
            <person name="Garcia M.J."/>
            <person name="Goble A."/>
            <person name="Goldman G.H."/>
            <person name="Gomi K."/>
            <person name="Griffith-Jones S."/>
            <person name="Gwilliam R."/>
            <person name="Haas B.J."/>
            <person name="Haas H."/>
            <person name="Harris D.E."/>
            <person name="Horiuchi H."/>
            <person name="Huang J."/>
            <person name="Humphray S."/>
            <person name="Jimenez J."/>
            <person name="Keller N."/>
            <person name="Khouri H."/>
            <person name="Kitamoto K."/>
            <person name="Kobayashi T."/>
            <person name="Konzack S."/>
            <person name="Kulkarni R."/>
            <person name="Kumagai T."/>
            <person name="Lafton A."/>
            <person name="Latge J.-P."/>
            <person name="Li W."/>
            <person name="Lord A."/>
            <person name="Lu C."/>
            <person name="Majoros W.H."/>
            <person name="May G.S."/>
            <person name="Miller B.L."/>
            <person name="Mohamoud Y."/>
            <person name="Molina M."/>
            <person name="Monod M."/>
            <person name="Mouyna I."/>
            <person name="Mulligan S."/>
            <person name="Murphy L.D."/>
            <person name="O'Neil S."/>
            <person name="Paulsen I."/>
            <person name="Penalva M.A."/>
            <person name="Pertea M."/>
            <person name="Price C."/>
            <person name="Pritchard B.L."/>
            <person name="Quail M.A."/>
            <person name="Rabbinowitsch E."/>
            <person name="Rawlins N."/>
            <person name="Rajandream M.A."/>
            <person name="Reichard U."/>
            <person name="Renauld H."/>
            <person name="Robson G.D."/>
            <person name="Rodriguez de Cordoba S."/>
            <person name="Rodriguez-Pena J.M."/>
            <person name="Ronning C.M."/>
            <person name="Rutter S."/>
            <person name="Salzberg S.L."/>
            <person name="Sanchez M."/>
            <person name="Sanchez-Ferrero J.C."/>
            <person name="Saunders D."/>
            <person name="Seeger K."/>
            <person name="Squares R."/>
            <person name="Squares S."/>
            <person name="Takeuchi M."/>
            <person name="Tekaia F."/>
            <person name="Turner G."/>
            <person name="Vazquez de Aldana C.R."/>
            <person name="Weidman J."/>
            <person name="White O."/>
            <person name="Woodward J.R."/>
            <person name="Yu J.-H."/>
            <person name="Fraser C.M."/>
            <person name="Galagan J.E."/>
            <person name="Asai K."/>
            <person name="Machida M."/>
            <person name="Hall N."/>
            <person name="Barrell B.G."/>
            <person name="Denning D.W."/>
        </authorList>
    </citation>
    <scope>NUCLEOTIDE SEQUENCE [LARGE SCALE GENOMIC DNA]</scope>
    <source>
        <strain>ATCC MYA-4609 / CBS 101355 / FGSC A1100 / Af293</strain>
    </source>
</reference>
<comment type="function">
    <text>Calcium-dependent, calmodulin-stimulated protein phosphatase. This subunit may have a role in the calmodulin activation of calcineurin.</text>
</comment>
<comment type="catalytic activity">
    <reaction>
        <text>O-phospho-L-seryl-[protein] + H2O = L-seryl-[protein] + phosphate</text>
        <dbReference type="Rhea" id="RHEA:20629"/>
        <dbReference type="Rhea" id="RHEA-COMP:9863"/>
        <dbReference type="Rhea" id="RHEA-COMP:11604"/>
        <dbReference type="ChEBI" id="CHEBI:15377"/>
        <dbReference type="ChEBI" id="CHEBI:29999"/>
        <dbReference type="ChEBI" id="CHEBI:43474"/>
        <dbReference type="ChEBI" id="CHEBI:83421"/>
        <dbReference type="EC" id="3.1.3.16"/>
    </reaction>
</comment>
<comment type="catalytic activity">
    <reaction>
        <text>O-phospho-L-threonyl-[protein] + H2O = L-threonyl-[protein] + phosphate</text>
        <dbReference type="Rhea" id="RHEA:47004"/>
        <dbReference type="Rhea" id="RHEA-COMP:11060"/>
        <dbReference type="Rhea" id="RHEA-COMP:11605"/>
        <dbReference type="ChEBI" id="CHEBI:15377"/>
        <dbReference type="ChEBI" id="CHEBI:30013"/>
        <dbReference type="ChEBI" id="CHEBI:43474"/>
        <dbReference type="ChEBI" id="CHEBI:61977"/>
        <dbReference type="EC" id="3.1.3.16"/>
    </reaction>
</comment>
<comment type="cofactor">
    <cofactor evidence="1">
        <name>Fe(3+)</name>
        <dbReference type="ChEBI" id="CHEBI:29034"/>
    </cofactor>
    <text evidence="1">Binds 1 Fe(3+) ion per subunit.</text>
</comment>
<comment type="cofactor">
    <cofactor evidence="1">
        <name>Zn(2+)</name>
        <dbReference type="ChEBI" id="CHEBI:29105"/>
    </cofactor>
    <text evidence="1">Binds 1 zinc ion per subunit.</text>
</comment>
<comment type="subunit">
    <text evidence="1">Composed of two components (A and B), the A component is the catalytic subunit and the B component confers calcium sensitivity.</text>
</comment>
<comment type="similarity">
    <text evidence="3">Belongs to the PPP phosphatase family. PP-2B subfamily.</text>
</comment>
<comment type="sequence caution" evidence="3">
    <conflict type="erroneous initiation">
        <sequence resource="EMBL-CDS" id="EAL91665"/>
    </conflict>
</comment>
<organism>
    <name type="scientific">Aspergillus fumigatus (strain ATCC MYA-4609 / CBS 101355 / FGSC A1100 / Af293)</name>
    <name type="common">Neosartorya fumigata</name>
    <dbReference type="NCBI Taxonomy" id="330879"/>
    <lineage>
        <taxon>Eukaryota</taxon>
        <taxon>Fungi</taxon>
        <taxon>Dikarya</taxon>
        <taxon>Ascomycota</taxon>
        <taxon>Pezizomycotina</taxon>
        <taxon>Eurotiomycetes</taxon>
        <taxon>Eurotiomycetidae</taxon>
        <taxon>Eurotiales</taxon>
        <taxon>Aspergillaceae</taxon>
        <taxon>Aspergillus</taxon>
        <taxon>Aspergillus subgen. Fumigati</taxon>
    </lineage>
</organism>
<gene>
    <name type="primary">cnaA</name>
    <name type="ORF">AFUA_5G09360</name>
</gene>
<proteinExistence type="evidence at protein level"/>
<keyword id="KW-0002">3D-structure</keyword>
<keyword id="KW-0112">Calmodulin-binding</keyword>
<keyword id="KW-0378">Hydrolase</keyword>
<keyword id="KW-0408">Iron</keyword>
<keyword id="KW-0479">Metal-binding</keyword>
<keyword id="KW-0904">Protein phosphatase</keyword>
<keyword id="KW-1185">Reference proteome</keyword>
<keyword id="KW-0862">Zinc</keyword>
<sequence length="534" mass="61107">MEDGTQVSTLERVIKEVQAPALSTPTDEMFWSPEDPSKPNLQFLKQHFYREGRLTEEQALWIIHAGTQILRSEPNLLEMDAPITVCGDVHGQYYDLMKLFEVGGDPSETRYLFLGDYVDRGYFSIECVLYLWALKIWYPNSLWLLRGNHECRHLTDYFTFKLECKHKYSERIYEACIESFCALPLAAVMNKQFLCIHGGLSPELHTLEDIKSIDRFREPPTHGLMCDILWADPLEEFGQEKTGDYFVHNSVRGCSYFFSYPAACAFLEKNNLLSIIRAHEAQDAGYRMYRKTRTTGFPSVMTIFSAPNYLDVYNNKAAVLKYENNVMNIRQFNCTPHPYWLPNFMDVFTWSLPFVGEKITDMLIAILNTCSKEELEDETPTSVSPSAPSPPLPMDVESSEFKRRAIKNKILAIGRLSRVFQVLREESERVTELKTAAGGRLPAGTLMLGAEGIKQAITNFEDARKVDLQNERLPPSHEEVIKRSEEERRAALERAQQEADNDTGLATVARRISMSAGSGRSRRQRDAARETREA</sequence>
<accession>Q4WUR1</accession>
<evidence type="ECO:0000250" key="1"/>
<evidence type="ECO:0000256" key="2">
    <source>
        <dbReference type="SAM" id="MobiDB-lite"/>
    </source>
</evidence>
<evidence type="ECO:0000305" key="3"/>
<evidence type="ECO:0007829" key="4">
    <source>
        <dbReference type="PDB" id="6TZ7"/>
    </source>
</evidence>
<evidence type="ECO:0007829" key="5">
    <source>
        <dbReference type="PDB" id="7U0U"/>
    </source>
</evidence>